<organism>
    <name type="scientific">Culex quinquefasciatus</name>
    <name type="common">Southern house mosquito</name>
    <name type="synonym">Culex pungens</name>
    <dbReference type="NCBI Taxonomy" id="7176"/>
    <lineage>
        <taxon>Eukaryota</taxon>
        <taxon>Metazoa</taxon>
        <taxon>Ecdysozoa</taxon>
        <taxon>Arthropoda</taxon>
        <taxon>Hexapoda</taxon>
        <taxon>Insecta</taxon>
        <taxon>Pterygota</taxon>
        <taxon>Neoptera</taxon>
        <taxon>Endopterygota</taxon>
        <taxon>Diptera</taxon>
        <taxon>Nematocera</taxon>
        <taxon>Culicoidea</taxon>
        <taxon>Culicidae</taxon>
        <taxon>Culicinae</taxon>
        <taxon>Culicini</taxon>
        <taxon>Culex</taxon>
        <taxon>Culex</taxon>
    </lineage>
</organism>
<gene>
    <name type="ORF">CPIJ001789</name>
</gene>
<name>FICD_CULQU</name>
<protein>
    <recommendedName>
        <fullName>Protein adenylyltransferase Fic</fullName>
        <ecNumber evidence="2">2.7.7.108</ecNumber>
    </recommendedName>
    <alternativeName>
        <fullName evidence="7">De-AMPylase Fic</fullName>
        <ecNumber evidence="1 2">3.1.4.-</ecNumber>
    </alternativeName>
</protein>
<evidence type="ECO:0000250" key="1">
    <source>
        <dbReference type="UniProtKB" id="A0A061I403"/>
    </source>
</evidence>
<evidence type="ECO:0000250" key="2">
    <source>
        <dbReference type="UniProtKB" id="Q8SWV6"/>
    </source>
</evidence>
<evidence type="ECO:0000250" key="3">
    <source>
        <dbReference type="UniProtKB" id="Q9BVA6"/>
    </source>
</evidence>
<evidence type="ECO:0000255" key="4"/>
<evidence type="ECO:0000255" key="5">
    <source>
        <dbReference type="PROSITE-ProRule" id="PRU00791"/>
    </source>
</evidence>
<evidence type="ECO:0000256" key="6">
    <source>
        <dbReference type="SAM" id="MobiDB-lite"/>
    </source>
</evidence>
<evidence type="ECO:0000305" key="7"/>
<sequence length="500" mass="56031">MCSVCEGSAEGLVTRKRTHSGGGRSAGSKRKWHRRMGGLSFLIFFVIGSLFSGLMFALLSYAPSYRSRVTPHYLPDGRFLQIADEARVLEPYLSAAVRLPDSLNGTPAGKQQQTARSNEQEALSSLKVAVEMKLMGKDDKALRLFQHAMALSPRHPEILTKYGEFLEHSQQDIVTADHYYYQALTVNPSHSEALANRQRTASIVEHLDQKRFERLDKKRDALSSVHALDAGLKRAEKEAYIQHIYHSVGIEGNTMSLAQTRSILETKMAVDGKSIDEHNEILGLDAAMKYINATLVNKNDFITLKDLLEIHRRVLGHVDPVEGGEFRRTQVYVGGHIPPGPGDLSILMSRFEGWLNAEQSFLMHPVRYAAMAHYKLVHIHPFSDGNGRTSRLLMNTLLMRAGYPPVIIQKQHRHKYYDYLQVANEGDIRPFVRFIADCTERTLDLYLWATSELSHPVPLLAQEEMGGAIGEREHGFGREGGSTVHEGSGTGDSIRIGTMW</sequence>
<reference key="1">
    <citation type="submission" date="2007-03" db="EMBL/GenBank/DDBJ databases">
        <title>Annotation of Culex pipiens quinquefasciatus.</title>
        <authorList>
            <consortium name="The Broad Institute Genome Sequencing Platform"/>
            <person name="Atkinson P.W."/>
            <person name="Hemingway J."/>
            <person name="Christensen B.M."/>
            <person name="Higgs S."/>
            <person name="Kodira C.D."/>
            <person name="Hannick L.I."/>
            <person name="Megy K."/>
            <person name="O'Leary S.B."/>
            <person name="Pearson M."/>
            <person name="Haas B.J."/>
            <person name="Mauceli E."/>
            <person name="Wortman J.R."/>
            <person name="Lee N.H."/>
            <person name="Guigo R."/>
            <person name="Stanke M."/>
            <person name="Alvarado L."/>
            <person name="Amedeo P."/>
            <person name="Antoine C.H."/>
            <person name="Arensburger P."/>
            <person name="Bidwell S.L."/>
            <person name="Crawford M."/>
            <person name="Camaro F."/>
            <person name="Devon K."/>
            <person name="Engels R."/>
            <person name="Hammond M."/>
            <person name="Howarth C."/>
            <person name="Koehrsen M."/>
            <person name="Lawson D."/>
            <person name="Montgomery P."/>
            <person name="Nene V."/>
            <person name="Nusbaum C."/>
            <person name="Puiu D."/>
            <person name="Romero-Severson J."/>
            <person name="Severson D.W."/>
            <person name="Shumway M."/>
            <person name="Sisk P."/>
            <person name="Stolte C."/>
            <person name="Zeng Q."/>
            <person name="Eisenstadt E."/>
            <person name="Fraser-Liggett C.M."/>
            <person name="Strausberg R."/>
            <person name="Galagan J."/>
            <person name="Birren B."/>
            <person name="Collins F.H."/>
        </authorList>
    </citation>
    <scope>NUCLEOTIDE SEQUENCE [LARGE SCALE GENOMIC DNA]</scope>
    <source>
        <strain>JHB</strain>
    </source>
</reference>
<keyword id="KW-0067">ATP-binding</keyword>
<keyword id="KW-0378">Hydrolase</keyword>
<keyword id="KW-0472">Membrane</keyword>
<keyword id="KW-0547">Nucleotide-binding</keyword>
<keyword id="KW-0548">Nucleotidyltransferase</keyword>
<keyword id="KW-1185">Reference proteome</keyword>
<keyword id="KW-0677">Repeat</keyword>
<keyword id="KW-0802">TPR repeat</keyword>
<keyword id="KW-0808">Transferase</keyword>
<keyword id="KW-0812">Transmembrane</keyword>
<keyword id="KW-1133">Transmembrane helix</keyword>
<comment type="function">
    <text evidence="1 2">Protein that can both mediate the addition of adenosine 5'-monophosphate (AMP) to specific residues of target proteins (AMPylation), and the removal of the same modification from target proteins (de-AMPylation), depending on the context (By similarity). The side chain of Glu-251 determines which of the two opposing activities (AMPylase or de-AMPylase) will take place (By similarity). Acts as a key regulator of the unfolded protein response (UPR) by mediating AMPylation or de-AMPylation of Hsc70-3/BiP. In unstressed cells, acts as an adenylyltransferase by mediating AMPylation of Hsc70-3/BiP at 'Thr-518', thereby inactivating it. In response to endoplasmic reticulum stress, acts as a phosphodiesterase by mediating removal of ATP (de-AMPylation) from Hsc70-3/BiP at 'Thr-518', leading to restore HSPA5/BiP activity (By similarity).</text>
</comment>
<comment type="catalytic activity">
    <reaction evidence="3">
        <text>L-tyrosyl-[protein] + ATP = O-(5'-adenylyl)-L-tyrosyl-[protein] + diphosphate</text>
        <dbReference type="Rhea" id="RHEA:54288"/>
        <dbReference type="Rhea" id="RHEA-COMP:10136"/>
        <dbReference type="Rhea" id="RHEA-COMP:13846"/>
        <dbReference type="ChEBI" id="CHEBI:30616"/>
        <dbReference type="ChEBI" id="CHEBI:33019"/>
        <dbReference type="ChEBI" id="CHEBI:46858"/>
        <dbReference type="ChEBI" id="CHEBI:83624"/>
        <dbReference type="EC" id="2.7.7.108"/>
    </reaction>
</comment>
<comment type="catalytic activity">
    <reaction evidence="2">
        <text>L-threonyl-[protein] + ATP = 3-O-(5'-adenylyl)-L-threonyl-[protein] + diphosphate</text>
        <dbReference type="Rhea" id="RHEA:54292"/>
        <dbReference type="Rhea" id="RHEA-COMP:11060"/>
        <dbReference type="Rhea" id="RHEA-COMP:13847"/>
        <dbReference type="ChEBI" id="CHEBI:30013"/>
        <dbReference type="ChEBI" id="CHEBI:30616"/>
        <dbReference type="ChEBI" id="CHEBI:33019"/>
        <dbReference type="ChEBI" id="CHEBI:138113"/>
        <dbReference type="EC" id="2.7.7.108"/>
    </reaction>
</comment>
<comment type="catalytic activity">
    <reaction evidence="2">
        <text>3-O-(5'-adenylyl)-L-threonyl-[protein] + H2O = L-threonyl-[protein] + AMP + H(+)</text>
        <dbReference type="Rhea" id="RHEA:55932"/>
        <dbReference type="Rhea" id="RHEA-COMP:11060"/>
        <dbReference type="Rhea" id="RHEA-COMP:13847"/>
        <dbReference type="ChEBI" id="CHEBI:15377"/>
        <dbReference type="ChEBI" id="CHEBI:15378"/>
        <dbReference type="ChEBI" id="CHEBI:30013"/>
        <dbReference type="ChEBI" id="CHEBI:138113"/>
        <dbReference type="ChEBI" id="CHEBI:456215"/>
    </reaction>
</comment>
<comment type="activity regulation">
    <text evidence="1 3">The side chain of Glu-251 determines which of the two opposing activities (AMPylase or de-AMPylase) will take place. In response to endoplasmic reticulum stress, mediates de-AMPylase activity (By similarity). Adenylyltransferase activity is inhibited by the inhibitory helix present at the N-terminus: Glu-251 binds ATP and competes with ATP-binding at Arg-391, thereby preventing adenylyltransferase activity (By similarity). In unstressed cells, disengagement of Glu-251 promotes adenylyltransferase activity (By similarity). Activation dissociates ATP-binding from Glu-251, allowing ordered binding of the entire ATP moiety with the alpha-phosphate in an orientation that is productive for accepting an incoming target hydroxyl side chain (By similarity).</text>
</comment>
<comment type="subunit">
    <text evidence="2">Homodimer.</text>
</comment>
<comment type="subcellular location">
    <subcellularLocation>
        <location evidence="2">Membrane</location>
        <topology evidence="2">Single-pass membrane protein</topology>
    </subcellularLocation>
</comment>
<comment type="domain">
    <text evidence="3">The fido domain mediates the adenylyltransferase activity.</text>
</comment>
<comment type="similarity">
    <text evidence="7">Belongs to the fic family.</text>
</comment>
<accession>B0W429</accession>
<dbReference type="EC" id="2.7.7.108" evidence="2"/>
<dbReference type="EC" id="3.1.4.-" evidence="1 2"/>
<dbReference type="EMBL" id="DS231834">
    <property type="protein sequence ID" value="EDS32622.1"/>
    <property type="molecule type" value="Genomic_DNA"/>
</dbReference>
<dbReference type="RefSeq" id="XP_001843463.1">
    <property type="nucleotide sequence ID" value="XM_001843411.1"/>
</dbReference>
<dbReference type="SMR" id="B0W429"/>
<dbReference type="FunCoup" id="B0W429">
    <property type="interactions" value="240"/>
</dbReference>
<dbReference type="STRING" id="7176.B0W429"/>
<dbReference type="EnsemblMetazoa" id="CPIJ001789-RA">
    <property type="protein sequence ID" value="CPIJ001789-PA"/>
    <property type="gene ID" value="CPIJ001789"/>
</dbReference>
<dbReference type="KEGG" id="cqu:CpipJ_CPIJ001789"/>
<dbReference type="VEuPathDB" id="VectorBase:CPIJ001789"/>
<dbReference type="VEuPathDB" id="VectorBase:CQUJHB009259"/>
<dbReference type="eggNOG" id="KOG3824">
    <property type="taxonomic scope" value="Eukaryota"/>
</dbReference>
<dbReference type="HOGENOM" id="CLU_040460_0_0_1"/>
<dbReference type="InParanoid" id="B0W429"/>
<dbReference type="OMA" id="QLRCQLW"/>
<dbReference type="OrthoDB" id="439046at2759"/>
<dbReference type="PhylomeDB" id="B0W429"/>
<dbReference type="Proteomes" id="UP000002320">
    <property type="component" value="Unassembled WGS sequence"/>
</dbReference>
<dbReference type="GO" id="GO:0016020">
    <property type="term" value="C:membrane"/>
    <property type="evidence" value="ECO:0007669"/>
    <property type="project" value="UniProtKB-SubCell"/>
</dbReference>
<dbReference type="GO" id="GO:0070733">
    <property type="term" value="F:AMPylase activity"/>
    <property type="evidence" value="ECO:0000250"/>
    <property type="project" value="UniProtKB"/>
</dbReference>
<dbReference type="GO" id="GO:0005524">
    <property type="term" value="F:ATP binding"/>
    <property type="evidence" value="ECO:0007669"/>
    <property type="project" value="UniProtKB-KW"/>
</dbReference>
<dbReference type="GO" id="GO:0016787">
    <property type="term" value="F:hydrolase activity"/>
    <property type="evidence" value="ECO:0007669"/>
    <property type="project" value="UniProtKB-KW"/>
</dbReference>
<dbReference type="GO" id="GO:0018117">
    <property type="term" value="P:protein adenylylation"/>
    <property type="evidence" value="ECO:0000250"/>
    <property type="project" value="UniProtKB"/>
</dbReference>
<dbReference type="FunFam" id="1.10.3290.10:FF:000001">
    <property type="entry name" value="adenosine monophosphate-protein transferase FICD"/>
    <property type="match status" value="1"/>
</dbReference>
<dbReference type="FunFam" id="1.25.40.10:FF:000522">
    <property type="entry name" value="Protein adenylyltransferase Fic"/>
    <property type="match status" value="1"/>
</dbReference>
<dbReference type="Gene3D" id="1.10.3290.10">
    <property type="entry name" value="Fido-like domain"/>
    <property type="match status" value="1"/>
</dbReference>
<dbReference type="Gene3D" id="1.25.40.10">
    <property type="entry name" value="Tetratricopeptide repeat domain"/>
    <property type="match status" value="1"/>
</dbReference>
<dbReference type="InterPro" id="IPR003812">
    <property type="entry name" value="Fido"/>
</dbReference>
<dbReference type="InterPro" id="IPR036597">
    <property type="entry name" value="Fido-like_dom_sf"/>
</dbReference>
<dbReference type="InterPro" id="IPR040198">
    <property type="entry name" value="Fido_containing"/>
</dbReference>
<dbReference type="InterPro" id="IPR011990">
    <property type="entry name" value="TPR-like_helical_dom_sf"/>
</dbReference>
<dbReference type="PANTHER" id="PTHR13504">
    <property type="entry name" value="FIDO DOMAIN-CONTAINING PROTEIN DDB_G0283145"/>
    <property type="match status" value="1"/>
</dbReference>
<dbReference type="PANTHER" id="PTHR13504:SF34">
    <property type="entry name" value="PROTEIN ADENYLYLTRANSFERASE FICD"/>
    <property type="match status" value="1"/>
</dbReference>
<dbReference type="Pfam" id="PF02661">
    <property type="entry name" value="Fic"/>
    <property type="match status" value="1"/>
</dbReference>
<dbReference type="SUPFAM" id="SSF140931">
    <property type="entry name" value="Fic-like"/>
    <property type="match status" value="1"/>
</dbReference>
<dbReference type="SUPFAM" id="SSF48452">
    <property type="entry name" value="TPR-like"/>
    <property type="match status" value="1"/>
</dbReference>
<dbReference type="PROSITE" id="PS51459">
    <property type="entry name" value="FIDO"/>
    <property type="match status" value="1"/>
</dbReference>
<dbReference type="PROSITE" id="PS50293">
    <property type="entry name" value="TPR_REGION"/>
    <property type="match status" value="1"/>
</dbReference>
<feature type="chain" id="PRO_0000381781" description="Protein adenylyltransferase Fic">
    <location>
        <begin position="1"/>
        <end position="500"/>
    </location>
</feature>
<feature type="transmembrane region" description="Helical" evidence="4">
    <location>
        <begin position="39"/>
        <end position="59"/>
    </location>
</feature>
<feature type="repeat" description="TPR 1">
    <location>
        <begin position="122"/>
        <end position="155"/>
    </location>
</feature>
<feature type="repeat" description="TPR 2">
    <location>
        <begin position="156"/>
        <end position="190"/>
    </location>
</feature>
<feature type="domain" description="Fido" evidence="5">
    <location>
        <begin position="302"/>
        <end position="437"/>
    </location>
</feature>
<feature type="region of interest" description="Disordered" evidence="6">
    <location>
        <begin position="477"/>
        <end position="500"/>
    </location>
</feature>
<feature type="short sequence motif" description="Inhibitory (S/T)XXXE(G/N) motif">
    <location>
        <begin position="247"/>
        <end position="252"/>
    </location>
</feature>
<feature type="active site" evidence="1">
    <location>
        <position position="380"/>
    </location>
</feature>
<feature type="binding site" evidence="3">
    <location>
        <position position="251"/>
    </location>
    <ligand>
        <name>ATP</name>
        <dbReference type="ChEBI" id="CHEBI:30616"/>
    </ligand>
</feature>
<feature type="binding site" evidence="3">
    <location>
        <begin position="333"/>
        <end position="336"/>
    </location>
    <ligand>
        <name>ATP</name>
        <dbReference type="ChEBI" id="CHEBI:30616"/>
    </ligand>
</feature>
<feature type="binding site" evidence="3">
    <location>
        <begin position="384"/>
        <end position="391"/>
    </location>
    <ligand>
        <name>ATP</name>
        <dbReference type="ChEBI" id="CHEBI:30616"/>
    </ligand>
</feature>
<feature type="binding site" evidence="3">
    <location>
        <begin position="416"/>
        <end position="417"/>
    </location>
    <ligand>
        <name>ATP</name>
        <dbReference type="ChEBI" id="CHEBI:30616"/>
    </ligand>
</feature>
<feature type="binding site" evidence="3">
    <location>
        <position position="424"/>
    </location>
    <ligand>
        <name>ATP</name>
        <dbReference type="ChEBI" id="CHEBI:30616"/>
    </ligand>
</feature>
<feature type="site" description="Important for autoinhibition of adenylyltransferase activity" evidence="3">
    <location>
        <position position="251"/>
    </location>
</feature>
<proteinExistence type="inferred from homology"/>